<keyword id="KW-0067">ATP-binding</keyword>
<keyword id="KW-0418">Kinase</keyword>
<keyword id="KW-0460">Magnesium</keyword>
<keyword id="KW-0479">Metal-binding</keyword>
<keyword id="KW-0547">Nucleotide-binding</keyword>
<keyword id="KW-1185">Reference proteome</keyword>
<keyword id="KW-0784">Thiamine biosynthesis</keyword>
<keyword id="KW-0808">Transferase</keyword>
<protein>
    <recommendedName>
        <fullName evidence="1">Thiamine-monophosphate kinase</fullName>
        <shortName evidence="1">TMP kinase</shortName>
        <shortName evidence="1">Thiamine-phosphate kinase</shortName>
        <ecNumber evidence="1">2.7.4.16</ecNumber>
    </recommendedName>
</protein>
<proteinExistence type="inferred from homology"/>
<reference key="1">
    <citation type="journal article" date="2002" name="Proc. Natl. Acad. Sci. U.S.A.">
        <title>The complete genome of hyperthermophile Methanopyrus kandleri AV19 and monophyly of archaeal methanogens.</title>
        <authorList>
            <person name="Slesarev A.I."/>
            <person name="Mezhevaya K.V."/>
            <person name="Makarova K.S."/>
            <person name="Polushin N.N."/>
            <person name="Shcherbinina O.V."/>
            <person name="Shakhova V.V."/>
            <person name="Belova G.I."/>
            <person name="Aravind L."/>
            <person name="Natale D.A."/>
            <person name="Rogozin I.B."/>
            <person name="Tatusov R.L."/>
            <person name="Wolf Y.I."/>
            <person name="Stetter K.O."/>
            <person name="Malykh A.G."/>
            <person name="Koonin E.V."/>
            <person name="Kozyavkin S.A."/>
        </authorList>
    </citation>
    <scope>NUCLEOTIDE SEQUENCE [LARGE SCALE GENOMIC DNA]</scope>
    <source>
        <strain>AV19 / DSM 6324 / JCM 9639 / NBRC 100938</strain>
    </source>
</reference>
<accession>Q8TXQ3</accession>
<feature type="chain" id="PRO_0000415640" description="Thiamine-monophosphate kinase">
    <location>
        <begin position="1"/>
        <end position="309"/>
    </location>
</feature>
<feature type="binding site" evidence="1">
    <location>
        <position position="41"/>
    </location>
    <ligand>
        <name>Mg(2+)</name>
        <dbReference type="ChEBI" id="CHEBI:18420"/>
        <label>3</label>
    </ligand>
</feature>
<feature type="binding site" evidence="1">
    <location>
        <position position="41"/>
    </location>
    <ligand>
        <name>Mg(2+)</name>
        <dbReference type="ChEBI" id="CHEBI:18420"/>
        <label>4</label>
    </ligand>
</feature>
<feature type="binding site" evidence="1">
    <location>
        <position position="55"/>
    </location>
    <ligand>
        <name>Mg(2+)</name>
        <dbReference type="ChEBI" id="CHEBI:18420"/>
        <label>1</label>
    </ligand>
</feature>
<feature type="binding site" evidence="1">
    <location>
        <position position="55"/>
    </location>
    <ligand>
        <name>Mg(2+)</name>
        <dbReference type="ChEBI" id="CHEBI:18420"/>
        <label>2</label>
    </ligand>
</feature>
<feature type="binding site" evidence="1">
    <location>
        <position position="62"/>
    </location>
    <ligand>
        <name>substrate</name>
    </ligand>
</feature>
<feature type="binding site" evidence="1">
    <location>
        <position position="83"/>
    </location>
    <ligand>
        <name>Mg(2+)</name>
        <dbReference type="ChEBI" id="CHEBI:18420"/>
        <label>2</label>
    </ligand>
</feature>
<feature type="binding site" evidence="1">
    <location>
        <position position="83"/>
    </location>
    <ligand>
        <name>Mg(2+)</name>
        <dbReference type="ChEBI" id="CHEBI:18420"/>
        <label>3</label>
    </ligand>
</feature>
<feature type="binding site" evidence="1">
    <location>
        <position position="83"/>
    </location>
    <ligand>
        <name>Mg(2+)</name>
        <dbReference type="ChEBI" id="CHEBI:18420"/>
        <label>4</label>
    </ligand>
</feature>
<feature type="binding site" evidence="1">
    <location>
        <begin position="127"/>
        <end position="128"/>
    </location>
    <ligand>
        <name>ATP</name>
        <dbReference type="ChEBI" id="CHEBI:30616"/>
    </ligand>
</feature>
<feature type="binding site" evidence="1">
    <location>
        <position position="128"/>
    </location>
    <ligand>
        <name>Mg(2+)</name>
        <dbReference type="ChEBI" id="CHEBI:18420"/>
        <label>1</label>
    </ligand>
</feature>
<feature type="binding site" evidence="1">
    <location>
        <position position="215"/>
    </location>
    <ligand>
        <name>Mg(2+)</name>
        <dbReference type="ChEBI" id="CHEBI:18420"/>
        <label>3</label>
    </ligand>
</feature>
<feature type="binding site" evidence="1">
    <location>
        <position position="217"/>
    </location>
    <ligand>
        <name>ATP</name>
        <dbReference type="ChEBI" id="CHEBI:30616"/>
    </ligand>
</feature>
<feature type="binding site" evidence="1">
    <location>
        <position position="218"/>
    </location>
    <ligand>
        <name>Mg(2+)</name>
        <dbReference type="ChEBI" id="CHEBI:18420"/>
        <label>5</label>
    </ligand>
</feature>
<feature type="binding site" evidence="1">
    <location>
        <position position="268"/>
    </location>
    <ligand>
        <name>substrate</name>
    </ligand>
</feature>
<comment type="function">
    <text evidence="1">Catalyzes the ATP-dependent phosphorylation of thiamine-monophosphate (TMP) to form thiamine-pyrophosphate (TPP), the active form of vitamin B1.</text>
</comment>
<comment type="catalytic activity">
    <reaction evidence="1">
        <text>thiamine phosphate + ATP = thiamine diphosphate + ADP</text>
        <dbReference type="Rhea" id="RHEA:15913"/>
        <dbReference type="ChEBI" id="CHEBI:30616"/>
        <dbReference type="ChEBI" id="CHEBI:37575"/>
        <dbReference type="ChEBI" id="CHEBI:58937"/>
        <dbReference type="ChEBI" id="CHEBI:456216"/>
        <dbReference type="EC" id="2.7.4.16"/>
    </reaction>
</comment>
<comment type="pathway">
    <text evidence="1">Cofactor biosynthesis; thiamine diphosphate biosynthesis; thiamine diphosphate from thiamine phosphate: step 1/1.</text>
</comment>
<comment type="miscellaneous">
    <text evidence="1">Reaction mechanism of ThiL seems to utilize a direct, inline transfer of the gamma-phosphate of ATP to TMP rather than a phosphorylated enzyme intermediate.</text>
</comment>
<comment type="similarity">
    <text evidence="1">Belongs to the thiamine-monophosphate kinase family.</text>
</comment>
<name>THIL_METKA</name>
<dbReference type="EC" id="2.7.4.16" evidence="1"/>
<dbReference type="EMBL" id="AE009439">
    <property type="protein sequence ID" value="AAM01822.1"/>
    <property type="molecule type" value="Genomic_DNA"/>
</dbReference>
<dbReference type="RefSeq" id="WP_011018977.1">
    <property type="nucleotide sequence ID" value="NC_003551.1"/>
</dbReference>
<dbReference type="SMR" id="Q8TXQ3"/>
<dbReference type="FunCoup" id="Q8TXQ3">
    <property type="interactions" value="88"/>
</dbReference>
<dbReference type="STRING" id="190192.MK0607"/>
<dbReference type="PaxDb" id="190192-MK0607"/>
<dbReference type="EnsemblBacteria" id="AAM01822">
    <property type="protein sequence ID" value="AAM01822"/>
    <property type="gene ID" value="MK0607"/>
</dbReference>
<dbReference type="GeneID" id="1476708"/>
<dbReference type="KEGG" id="mka:MK0607"/>
<dbReference type="HOGENOM" id="CLU_046964_1_1_2"/>
<dbReference type="InParanoid" id="Q8TXQ3"/>
<dbReference type="OrthoDB" id="45909at2157"/>
<dbReference type="UniPathway" id="UPA00060">
    <property type="reaction ID" value="UER00142"/>
</dbReference>
<dbReference type="Proteomes" id="UP000001826">
    <property type="component" value="Chromosome"/>
</dbReference>
<dbReference type="GO" id="GO:0005524">
    <property type="term" value="F:ATP binding"/>
    <property type="evidence" value="ECO:0007669"/>
    <property type="project" value="UniProtKB-UniRule"/>
</dbReference>
<dbReference type="GO" id="GO:0000287">
    <property type="term" value="F:magnesium ion binding"/>
    <property type="evidence" value="ECO:0007669"/>
    <property type="project" value="UniProtKB-UniRule"/>
</dbReference>
<dbReference type="GO" id="GO:0009030">
    <property type="term" value="F:thiamine-phosphate kinase activity"/>
    <property type="evidence" value="ECO:0007669"/>
    <property type="project" value="UniProtKB-UniRule"/>
</dbReference>
<dbReference type="GO" id="GO:0009228">
    <property type="term" value="P:thiamine biosynthetic process"/>
    <property type="evidence" value="ECO:0007669"/>
    <property type="project" value="UniProtKB-KW"/>
</dbReference>
<dbReference type="GO" id="GO:0009229">
    <property type="term" value="P:thiamine diphosphate biosynthetic process"/>
    <property type="evidence" value="ECO:0007669"/>
    <property type="project" value="UniProtKB-UniRule"/>
</dbReference>
<dbReference type="CDD" id="cd02194">
    <property type="entry name" value="ThiL"/>
    <property type="match status" value="1"/>
</dbReference>
<dbReference type="Gene3D" id="3.90.650.10">
    <property type="entry name" value="PurM-like C-terminal domain"/>
    <property type="match status" value="1"/>
</dbReference>
<dbReference type="Gene3D" id="3.30.1330.10">
    <property type="entry name" value="PurM-like, N-terminal domain"/>
    <property type="match status" value="1"/>
</dbReference>
<dbReference type="HAMAP" id="MF_02128">
    <property type="entry name" value="TMP_kinase"/>
    <property type="match status" value="1"/>
</dbReference>
<dbReference type="InterPro" id="IPR010918">
    <property type="entry name" value="PurM-like_C_dom"/>
</dbReference>
<dbReference type="InterPro" id="IPR036676">
    <property type="entry name" value="PurM-like_C_sf"/>
</dbReference>
<dbReference type="InterPro" id="IPR016188">
    <property type="entry name" value="PurM-like_N"/>
</dbReference>
<dbReference type="InterPro" id="IPR036921">
    <property type="entry name" value="PurM-like_N_sf"/>
</dbReference>
<dbReference type="InterPro" id="IPR006283">
    <property type="entry name" value="ThiL-like"/>
</dbReference>
<dbReference type="NCBIfam" id="TIGR01379">
    <property type="entry name" value="thiL"/>
    <property type="match status" value="1"/>
</dbReference>
<dbReference type="PANTHER" id="PTHR30270">
    <property type="entry name" value="THIAMINE-MONOPHOSPHATE KINASE"/>
    <property type="match status" value="1"/>
</dbReference>
<dbReference type="PANTHER" id="PTHR30270:SF0">
    <property type="entry name" value="THIAMINE-MONOPHOSPHATE KINASE"/>
    <property type="match status" value="1"/>
</dbReference>
<dbReference type="Pfam" id="PF00586">
    <property type="entry name" value="AIRS"/>
    <property type="match status" value="1"/>
</dbReference>
<dbReference type="Pfam" id="PF02769">
    <property type="entry name" value="AIRS_C"/>
    <property type="match status" value="1"/>
</dbReference>
<dbReference type="PIRSF" id="PIRSF005303">
    <property type="entry name" value="Thiam_monoph_kin"/>
    <property type="match status" value="1"/>
</dbReference>
<dbReference type="SUPFAM" id="SSF56042">
    <property type="entry name" value="PurM C-terminal domain-like"/>
    <property type="match status" value="1"/>
</dbReference>
<dbReference type="SUPFAM" id="SSF55326">
    <property type="entry name" value="PurM N-terminal domain-like"/>
    <property type="match status" value="1"/>
</dbReference>
<gene>
    <name evidence="1" type="primary">thiL</name>
    <name type="ordered locus">MK0607</name>
</gene>
<organism>
    <name type="scientific">Methanopyrus kandleri (strain AV19 / DSM 6324 / JCM 9639 / NBRC 100938)</name>
    <dbReference type="NCBI Taxonomy" id="190192"/>
    <lineage>
        <taxon>Archaea</taxon>
        <taxon>Methanobacteriati</taxon>
        <taxon>Methanobacteriota</taxon>
        <taxon>Methanomada group</taxon>
        <taxon>Methanopyri</taxon>
        <taxon>Methanopyrales</taxon>
        <taxon>Methanopyraceae</taxon>
        <taxon>Methanopyrus</taxon>
    </lineage>
</organism>
<evidence type="ECO:0000255" key="1">
    <source>
        <dbReference type="HAMAP-Rule" id="MF_02128"/>
    </source>
</evidence>
<sequence>MSSGFKRPSPRTWRPKEEEELIELIVEACPTEGPRVKAGDDDAAVLPDGTVVNFDAMTRSRHVPKELRDRDLGWKFVASVVSDVGAMGGEPSFFGFSVCLDDEVDVEQLVLGISEGLREFGVSLIGGDVVEGEELVLSGTCLGKLKGEPLLMSNARPGDVVAVTGPLGGPNAFVRAILNGMEPEETLYERFARPRPPVEVGVELARGGYRAAVTDISDGLLAEAEAIARRSGVAIEIHTWKVPVDEGVEEVAQEFDVDPVDLALEGGEDYEFLICGPEDVVKEFGLTTIGRVTEGEGVRIVRNPRARSE</sequence>